<evidence type="ECO:0000255" key="1"/>
<evidence type="ECO:0000255" key="2">
    <source>
        <dbReference type="PROSITE-ProRule" id="PRU00434"/>
    </source>
</evidence>
<evidence type="ECO:0000305" key="3"/>
<sequence length="845" mass="96318">MWGASDKKYKSNQFRAMFFKNATFIKRQKCSLCVQISIPLILVIILVIVNFWVKSQIGSLQTNGGKLMNSTSTYQYNSLTFGYMLSVNENNITEIGYKDSDGSGSGLLNYTPQLYIPAFKAYTPFFVPFASVENMDDKILAMKENATFESLSSETLPLSALIFNDFNVNNRSLDYTIQCEEQSRYSFYPYEAFVAFSMNTMTTTILNYFLGGNGTIYKSNIATLPYYQQSTTIDIASLLGGSFYPFALSFIMPLFIYSIVYEKQEKLRDLSLMMGLKIRNYWFMTYIFNFLIYFIIIVFVVGVSSIFGFAVFVKGSQFAMFLFLFAWGNSMITFSFFLSTFFKKTRAASIFGYFLVIIAVNLNSILSYQVFKDSTPPVPYYWIPLLAFYRGMSQLSTQCGIDLCPEWSAYTWEFEMSKIIFWLYIDAIVYLLIALYLDQVLPREFGVPSHPLFFLKPILNLFKNKDNDKSNTINGGSGGGRRFSETSSLINSADFDVENNNGEQEIVEDEDVLEEKEMIINRRYDPNEMTVIIEGLTKHYVGRPKPSVDNLYLSVRKGEVLGFLGANGAGKTTTISMLTGLYTPTSGTAHVAGLDIRYDMDNIHHVIGVAMQFDIFWEDLSCVETLLYFTRLKGVPPEREIQSVESILKEVNLFEVKERLVKELSGGMKRRLSFAVAMTGDSSIIFLDEPSTGISSELRRDLWRTINDLKKNRSIILTTHSMEEADVLSSRIAIISQGKLQCIGTQNHLKAKFGDGYSVRINVEEPYINTHNPTELITKFSPQAVLTESFDGSYNYRFPKNTVISDLYQYLVSHKYDHHLQEWSFSQTSLEDVFLKISANDDTIN</sequence>
<organism>
    <name type="scientific">Dictyostelium discoideum</name>
    <name type="common">Social amoeba</name>
    <dbReference type="NCBI Taxonomy" id="44689"/>
    <lineage>
        <taxon>Eukaryota</taxon>
        <taxon>Amoebozoa</taxon>
        <taxon>Evosea</taxon>
        <taxon>Eumycetozoa</taxon>
        <taxon>Dictyostelia</taxon>
        <taxon>Dictyosteliales</taxon>
        <taxon>Dictyosteliaceae</taxon>
        <taxon>Dictyostelium</taxon>
    </lineage>
</organism>
<reference key="1">
    <citation type="journal article" date="2005" name="Nature">
        <title>The genome of the social amoeba Dictyostelium discoideum.</title>
        <authorList>
            <person name="Eichinger L."/>
            <person name="Pachebat J.A."/>
            <person name="Gloeckner G."/>
            <person name="Rajandream M.A."/>
            <person name="Sucgang R."/>
            <person name="Berriman M."/>
            <person name="Song J."/>
            <person name="Olsen R."/>
            <person name="Szafranski K."/>
            <person name="Xu Q."/>
            <person name="Tunggal B."/>
            <person name="Kummerfeld S."/>
            <person name="Madera M."/>
            <person name="Konfortov B.A."/>
            <person name="Rivero F."/>
            <person name="Bankier A.T."/>
            <person name="Lehmann R."/>
            <person name="Hamlin N."/>
            <person name="Davies R."/>
            <person name="Gaudet P."/>
            <person name="Fey P."/>
            <person name="Pilcher K."/>
            <person name="Chen G."/>
            <person name="Saunders D."/>
            <person name="Sodergren E.J."/>
            <person name="Davis P."/>
            <person name="Kerhornou A."/>
            <person name="Nie X."/>
            <person name="Hall N."/>
            <person name="Anjard C."/>
            <person name="Hemphill L."/>
            <person name="Bason N."/>
            <person name="Farbrother P."/>
            <person name="Desany B."/>
            <person name="Just E."/>
            <person name="Morio T."/>
            <person name="Rost R."/>
            <person name="Churcher C.M."/>
            <person name="Cooper J."/>
            <person name="Haydock S."/>
            <person name="van Driessche N."/>
            <person name="Cronin A."/>
            <person name="Goodhead I."/>
            <person name="Muzny D.M."/>
            <person name="Mourier T."/>
            <person name="Pain A."/>
            <person name="Lu M."/>
            <person name="Harper D."/>
            <person name="Lindsay R."/>
            <person name="Hauser H."/>
            <person name="James K.D."/>
            <person name="Quiles M."/>
            <person name="Madan Babu M."/>
            <person name="Saito T."/>
            <person name="Buchrieser C."/>
            <person name="Wardroper A."/>
            <person name="Felder M."/>
            <person name="Thangavelu M."/>
            <person name="Johnson D."/>
            <person name="Knights A."/>
            <person name="Loulseged H."/>
            <person name="Mungall K.L."/>
            <person name="Oliver K."/>
            <person name="Price C."/>
            <person name="Quail M.A."/>
            <person name="Urushihara H."/>
            <person name="Hernandez J."/>
            <person name="Rabbinowitsch E."/>
            <person name="Steffen D."/>
            <person name="Sanders M."/>
            <person name="Ma J."/>
            <person name="Kohara Y."/>
            <person name="Sharp S."/>
            <person name="Simmonds M.N."/>
            <person name="Spiegler S."/>
            <person name="Tivey A."/>
            <person name="Sugano S."/>
            <person name="White B."/>
            <person name="Walker D."/>
            <person name="Woodward J.R."/>
            <person name="Winckler T."/>
            <person name="Tanaka Y."/>
            <person name="Shaulsky G."/>
            <person name="Schleicher M."/>
            <person name="Weinstock G.M."/>
            <person name="Rosenthal A."/>
            <person name="Cox E.C."/>
            <person name="Chisholm R.L."/>
            <person name="Gibbs R.A."/>
            <person name="Loomis W.F."/>
            <person name="Platzer M."/>
            <person name="Kay R.R."/>
            <person name="Williams J.G."/>
            <person name="Dear P.H."/>
            <person name="Noegel A.A."/>
            <person name="Barrell B.G."/>
            <person name="Kuspa A."/>
        </authorList>
    </citation>
    <scope>NUCLEOTIDE SEQUENCE [LARGE SCALE GENOMIC DNA]</scope>
    <source>
        <strain>AX4</strain>
    </source>
</reference>
<reference key="2">
    <citation type="journal article" date="2002" name="Eukaryot. Cell">
        <title>Evolutionary analyses of ABC transporters of Dictyostelium discoideum.</title>
        <authorList>
            <person name="Anjard C."/>
            <person name="Loomis W.F."/>
        </authorList>
    </citation>
    <scope>NUCLEOTIDE SEQUENCE [GENOMIC DNA] OF 68-845</scope>
    <scope>NOMENCLATURE</scope>
    <source>
        <strain>AX4</strain>
    </source>
</reference>
<dbReference type="EMBL" id="AAFI02000187">
    <property type="protein sequence ID" value="EAL61346.1"/>
    <property type="molecule type" value="Genomic_DNA"/>
</dbReference>
<dbReference type="EMBL" id="AF465311">
    <property type="protein sequence ID" value="AAL85302.1"/>
    <property type="molecule type" value="Genomic_DNA"/>
</dbReference>
<dbReference type="EMBL" id="AF491005">
    <property type="protein sequence ID" value="AAL99042.1"/>
    <property type="molecule type" value="Genomic_DNA"/>
</dbReference>
<dbReference type="RefSeq" id="XP_629791.1">
    <property type="nucleotide sequence ID" value="XM_629789.1"/>
</dbReference>
<dbReference type="SMR" id="Q54DT1"/>
<dbReference type="FunCoup" id="Q54DT1">
    <property type="interactions" value="100"/>
</dbReference>
<dbReference type="STRING" id="44689.Q54DT1"/>
<dbReference type="PaxDb" id="44689-DDB0201653"/>
<dbReference type="EnsemblProtists" id="EAL61346">
    <property type="protein sequence ID" value="EAL61346"/>
    <property type="gene ID" value="DDB_G0291980"/>
</dbReference>
<dbReference type="GeneID" id="8628468"/>
<dbReference type="KEGG" id="ddi:DDB_G0291980"/>
<dbReference type="dictyBase" id="DDB_G0291980">
    <property type="gene designation" value="abcA9"/>
</dbReference>
<dbReference type="VEuPathDB" id="AmoebaDB:DDB_G0291980"/>
<dbReference type="eggNOG" id="KOG0059">
    <property type="taxonomic scope" value="Eukaryota"/>
</dbReference>
<dbReference type="HOGENOM" id="CLU_000604_19_5_1"/>
<dbReference type="InParanoid" id="Q54DT1"/>
<dbReference type="OMA" id="WEDLSCV"/>
<dbReference type="PhylomeDB" id="Q54DT1"/>
<dbReference type="PRO" id="PR:Q54DT1"/>
<dbReference type="Proteomes" id="UP000002195">
    <property type="component" value="Chromosome 6"/>
</dbReference>
<dbReference type="GO" id="GO:0043231">
    <property type="term" value="C:intracellular membrane-bounded organelle"/>
    <property type="evidence" value="ECO:0000318"/>
    <property type="project" value="GO_Central"/>
</dbReference>
<dbReference type="GO" id="GO:0016020">
    <property type="term" value="C:membrane"/>
    <property type="evidence" value="ECO:0007669"/>
    <property type="project" value="UniProtKB-SubCell"/>
</dbReference>
<dbReference type="GO" id="GO:0140359">
    <property type="term" value="F:ABC-type transporter activity"/>
    <property type="evidence" value="ECO:0007669"/>
    <property type="project" value="InterPro"/>
</dbReference>
<dbReference type="GO" id="GO:0005524">
    <property type="term" value="F:ATP binding"/>
    <property type="evidence" value="ECO:0007669"/>
    <property type="project" value="UniProtKB-KW"/>
</dbReference>
<dbReference type="GO" id="GO:0016887">
    <property type="term" value="F:ATP hydrolysis activity"/>
    <property type="evidence" value="ECO:0007669"/>
    <property type="project" value="InterPro"/>
</dbReference>
<dbReference type="GO" id="GO:0042626">
    <property type="term" value="F:ATPase-coupled transmembrane transporter activity"/>
    <property type="evidence" value="ECO:0000318"/>
    <property type="project" value="GO_Central"/>
</dbReference>
<dbReference type="GO" id="GO:0005319">
    <property type="term" value="F:lipid transporter activity"/>
    <property type="evidence" value="ECO:0000318"/>
    <property type="project" value="GO_Central"/>
</dbReference>
<dbReference type="GO" id="GO:0006869">
    <property type="term" value="P:lipid transport"/>
    <property type="evidence" value="ECO:0000318"/>
    <property type="project" value="GO_Central"/>
</dbReference>
<dbReference type="GO" id="GO:0031288">
    <property type="term" value="P:sorocarp morphogenesis"/>
    <property type="evidence" value="ECO:0000315"/>
    <property type="project" value="dictyBase"/>
</dbReference>
<dbReference type="CDD" id="cd03263">
    <property type="entry name" value="ABC_subfamily_A"/>
    <property type="match status" value="1"/>
</dbReference>
<dbReference type="FunFam" id="3.40.50.300:FF:000665">
    <property type="entry name" value="ABC transporter A family member 2"/>
    <property type="match status" value="1"/>
</dbReference>
<dbReference type="Gene3D" id="3.40.50.300">
    <property type="entry name" value="P-loop containing nucleotide triphosphate hydrolases"/>
    <property type="match status" value="1"/>
</dbReference>
<dbReference type="InterPro" id="IPR003593">
    <property type="entry name" value="AAA+_ATPase"/>
</dbReference>
<dbReference type="InterPro" id="IPR013525">
    <property type="entry name" value="ABC2_TM"/>
</dbReference>
<dbReference type="InterPro" id="IPR003439">
    <property type="entry name" value="ABC_transporter-like_ATP-bd"/>
</dbReference>
<dbReference type="InterPro" id="IPR017871">
    <property type="entry name" value="ABC_transporter-like_CS"/>
</dbReference>
<dbReference type="InterPro" id="IPR026082">
    <property type="entry name" value="ABCA"/>
</dbReference>
<dbReference type="InterPro" id="IPR027417">
    <property type="entry name" value="P-loop_NTPase"/>
</dbReference>
<dbReference type="PANTHER" id="PTHR19229:SF272">
    <property type="entry name" value="ABC TRANSPORTER A FAMILY MEMBER 7-RELATED"/>
    <property type="match status" value="1"/>
</dbReference>
<dbReference type="PANTHER" id="PTHR19229">
    <property type="entry name" value="ATP-BINDING CASSETTE TRANSPORTER SUBFAMILY A ABCA"/>
    <property type="match status" value="1"/>
</dbReference>
<dbReference type="Pfam" id="PF12698">
    <property type="entry name" value="ABC2_membrane_3"/>
    <property type="match status" value="1"/>
</dbReference>
<dbReference type="Pfam" id="PF00005">
    <property type="entry name" value="ABC_tran"/>
    <property type="match status" value="1"/>
</dbReference>
<dbReference type="SMART" id="SM00382">
    <property type="entry name" value="AAA"/>
    <property type="match status" value="1"/>
</dbReference>
<dbReference type="SUPFAM" id="SSF52540">
    <property type="entry name" value="P-loop containing nucleoside triphosphate hydrolases"/>
    <property type="match status" value="1"/>
</dbReference>
<dbReference type="PROSITE" id="PS00211">
    <property type="entry name" value="ABC_TRANSPORTER_1"/>
    <property type="match status" value="1"/>
</dbReference>
<dbReference type="PROSITE" id="PS50893">
    <property type="entry name" value="ABC_TRANSPORTER_2"/>
    <property type="match status" value="1"/>
</dbReference>
<comment type="subcellular location">
    <subcellularLocation>
        <location evidence="3">Membrane</location>
        <topology evidence="3">Multi-pass membrane protein</topology>
    </subcellularLocation>
</comment>
<comment type="similarity">
    <text evidence="3">Belongs to the ABC transporter superfamily. ABCA family.</text>
</comment>
<protein>
    <recommendedName>
        <fullName>ABC transporter A family member 9</fullName>
    </recommendedName>
    <alternativeName>
        <fullName>ABC transporter ABCA.9</fullName>
    </alternativeName>
</protein>
<proteinExistence type="inferred from homology"/>
<accession>Q54DT1</accession>
<accession>Q8T5Z8</accession>
<accession>Q8T6I8</accession>
<name>ABCA9_DICDI</name>
<feature type="chain" id="PRO_0000363841" description="ABC transporter A family member 9">
    <location>
        <begin position="1"/>
        <end position="845"/>
    </location>
</feature>
<feature type="transmembrane region" description="Helical" evidence="1">
    <location>
        <begin position="33"/>
        <end position="53"/>
    </location>
</feature>
<feature type="transmembrane region" description="Helical" evidence="1">
    <location>
        <begin position="192"/>
        <end position="212"/>
    </location>
</feature>
<feature type="transmembrane region" description="Helical" evidence="1">
    <location>
        <begin position="235"/>
        <end position="255"/>
    </location>
</feature>
<feature type="transmembrane region" description="Helical" evidence="1">
    <location>
        <begin position="292"/>
        <end position="312"/>
    </location>
</feature>
<feature type="transmembrane region" description="Helical" evidence="1">
    <location>
        <begin position="318"/>
        <end position="338"/>
    </location>
</feature>
<feature type="transmembrane region" description="Helical" evidence="1">
    <location>
        <begin position="347"/>
        <end position="367"/>
    </location>
</feature>
<feature type="transmembrane region" description="Helical" evidence="1">
    <location>
        <begin position="417"/>
        <end position="437"/>
    </location>
</feature>
<feature type="domain" description="ABC transporter" evidence="2">
    <location>
        <begin position="531"/>
        <end position="762"/>
    </location>
</feature>
<feature type="binding site" evidence="2">
    <location>
        <begin position="565"/>
        <end position="572"/>
    </location>
    <ligand>
        <name>ATP</name>
        <dbReference type="ChEBI" id="CHEBI:30616"/>
    </ligand>
</feature>
<gene>
    <name type="primary">abcA9</name>
    <name type="synonym">abcA12</name>
    <name type="ORF">DDB_G0291980</name>
</gene>
<keyword id="KW-0067">ATP-binding</keyword>
<keyword id="KW-0472">Membrane</keyword>
<keyword id="KW-0547">Nucleotide-binding</keyword>
<keyword id="KW-1185">Reference proteome</keyword>
<keyword id="KW-0812">Transmembrane</keyword>
<keyword id="KW-1133">Transmembrane helix</keyword>
<keyword id="KW-0813">Transport</keyword>